<gene>
    <name evidence="1" type="primary">ftsZ1</name>
    <name type="ordered locus">PF1988</name>
</gene>
<sequence>MLKLVENVVGRVSEEENKVPEVQVPQSSIDEELKKIVEQIKARIYVVGVGGAGCNTVNRMMEVGVTGAKIIAVNTDAQDLLKVKAHQKILIGKELTRGLGAGNDPKIGEEAAKESERELRDALEGADMVFITCGLGGGTGTGAAPVIAEIARKMGALTVSVVTLPFTMEGIRRAKNAEYGLKRLVKYSDTVIVIPNDKLLEVAPKLPIQMAFKVADEILVQAVKGITELITKPGLVNLDFNDVRAVMKDGGVAMIGIGESDSEKRALEAAEQALNSPLLDVDISGATGALIHISGADVKLEEAQQIIEYVTRNVDPKAQVIWGIQLEPELEKTIRVMVVITGVTSRYITPEEETPLETPEESPSIEISIPEL</sequence>
<name>FTSZ1_PYRFU</name>
<reference key="1">
    <citation type="journal article" date="1999" name="Genetics">
        <title>Divergence of the hyperthermophilic archaea Pyrococcus furiosus and P. horikoshii inferred from complete genomic sequences.</title>
        <authorList>
            <person name="Maeder D.L."/>
            <person name="Weiss R.B."/>
            <person name="Dunn D.M."/>
            <person name="Cherry J.L."/>
            <person name="Gonzalez J.M."/>
            <person name="DiRuggiero J."/>
            <person name="Robb F.T."/>
        </authorList>
    </citation>
    <scope>NUCLEOTIDE SEQUENCE [LARGE SCALE GENOMIC DNA]</scope>
    <source>
        <strain>ATCC 43587 / DSM 3638 / JCM 8422 / Vc1</strain>
    </source>
</reference>
<dbReference type="EMBL" id="AE009950">
    <property type="protein sequence ID" value="AAL82112.1"/>
    <property type="molecule type" value="Genomic_DNA"/>
</dbReference>
<dbReference type="SMR" id="Q8TZK3"/>
<dbReference type="STRING" id="186497.PF1988"/>
<dbReference type="PaxDb" id="186497-PF1988"/>
<dbReference type="KEGG" id="pfu:PF1988"/>
<dbReference type="PATRIC" id="fig|186497.12.peg.2064"/>
<dbReference type="eggNOG" id="arCOG02201">
    <property type="taxonomic scope" value="Archaea"/>
</dbReference>
<dbReference type="HOGENOM" id="CLU_024865_0_1_2"/>
<dbReference type="OrthoDB" id="371908at2157"/>
<dbReference type="PhylomeDB" id="Q8TZK3"/>
<dbReference type="Proteomes" id="UP000001013">
    <property type="component" value="Chromosome"/>
</dbReference>
<dbReference type="GO" id="GO:0032153">
    <property type="term" value="C:cell division site"/>
    <property type="evidence" value="ECO:0007669"/>
    <property type="project" value="UniProtKB-UniRule"/>
</dbReference>
<dbReference type="GO" id="GO:0005737">
    <property type="term" value="C:cytoplasm"/>
    <property type="evidence" value="ECO:0007669"/>
    <property type="project" value="UniProtKB-SubCell"/>
</dbReference>
<dbReference type="GO" id="GO:0005525">
    <property type="term" value="F:GTP binding"/>
    <property type="evidence" value="ECO:0007669"/>
    <property type="project" value="UniProtKB-UniRule"/>
</dbReference>
<dbReference type="GO" id="GO:0003924">
    <property type="term" value="F:GTPase activity"/>
    <property type="evidence" value="ECO:0007669"/>
    <property type="project" value="UniProtKB-UniRule"/>
</dbReference>
<dbReference type="GO" id="GO:0043093">
    <property type="term" value="P:FtsZ-dependent cytokinesis"/>
    <property type="evidence" value="ECO:0007669"/>
    <property type="project" value="UniProtKB-UniRule"/>
</dbReference>
<dbReference type="GO" id="GO:0051258">
    <property type="term" value="P:protein polymerization"/>
    <property type="evidence" value="ECO:0007669"/>
    <property type="project" value="UniProtKB-UniRule"/>
</dbReference>
<dbReference type="CDD" id="cd02201">
    <property type="entry name" value="FtsZ_type1"/>
    <property type="match status" value="1"/>
</dbReference>
<dbReference type="FunFam" id="3.40.50.1440:FF:000023">
    <property type="entry name" value="Cell division protein FtsZ"/>
    <property type="match status" value="1"/>
</dbReference>
<dbReference type="Gene3D" id="3.30.1330.20">
    <property type="entry name" value="Tubulin/FtsZ, C-terminal domain"/>
    <property type="match status" value="1"/>
</dbReference>
<dbReference type="Gene3D" id="3.40.50.1440">
    <property type="entry name" value="Tubulin/FtsZ, GTPase domain"/>
    <property type="match status" value="1"/>
</dbReference>
<dbReference type="HAMAP" id="MF_00909">
    <property type="entry name" value="FtsZ"/>
    <property type="match status" value="1"/>
</dbReference>
<dbReference type="InterPro" id="IPR000158">
    <property type="entry name" value="Cell_div_FtsZ"/>
</dbReference>
<dbReference type="InterPro" id="IPR020805">
    <property type="entry name" value="Cell_div_FtsZ_CS"/>
</dbReference>
<dbReference type="InterPro" id="IPR045061">
    <property type="entry name" value="FtsZ/CetZ"/>
</dbReference>
<dbReference type="InterPro" id="IPR024757">
    <property type="entry name" value="FtsZ_C"/>
</dbReference>
<dbReference type="InterPro" id="IPR008280">
    <property type="entry name" value="Tub_FtsZ_C"/>
</dbReference>
<dbReference type="InterPro" id="IPR037103">
    <property type="entry name" value="Tubulin/FtsZ-like_C"/>
</dbReference>
<dbReference type="InterPro" id="IPR018316">
    <property type="entry name" value="Tubulin/FtsZ_2-layer-sand-dom"/>
</dbReference>
<dbReference type="InterPro" id="IPR036525">
    <property type="entry name" value="Tubulin/FtsZ_GTPase_sf"/>
</dbReference>
<dbReference type="InterPro" id="IPR003008">
    <property type="entry name" value="Tubulin_FtsZ_GTPase"/>
</dbReference>
<dbReference type="NCBIfam" id="TIGR00065">
    <property type="entry name" value="ftsZ"/>
    <property type="match status" value="1"/>
</dbReference>
<dbReference type="PANTHER" id="PTHR30314">
    <property type="entry name" value="CELL DIVISION PROTEIN FTSZ-RELATED"/>
    <property type="match status" value="1"/>
</dbReference>
<dbReference type="PANTHER" id="PTHR30314:SF3">
    <property type="entry name" value="MITOCHONDRIAL DIVISION PROTEIN FSZA"/>
    <property type="match status" value="1"/>
</dbReference>
<dbReference type="Pfam" id="PF12327">
    <property type="entry name" value="FtsZ_C"/>
    <property type="match status" value="1"/>
</dbReference>
<dbReference type="Pfam" id="PF00091">
    <property type="entry name" value="Tubulin"/>
    <property type="match status" value="1"/>
</dbReference>
<dbReference type="PRINTS" id="PR00423">
    <property type="entry name" value="CELLDVISFTSZ"/>
</dbReference>
<dbReference type="SMART" id="SM00864">
    <property type="entry name" value="Tubulin"/>
    <property type="match status" value="1"/>
</dbReference>
<dbReference type="SMART" id="SM00865">
    <property type="entry name" value="Tubulin_C"/>
    <property type="match status" value="1"/>
</dbReference>
<dbReference type="SUPFAM" id="SSF55307">
    <property type="entry name" value="Tubulin C-terminal domain-like"/>
    <property type="match status" value="1"/>
</dbReference>
<dbReference type="SUPFAM" id="SSF52490">
    <property type="entry name" value="Tubulin nucleotide-binding domain-like"/>
    <property type="match status" value="1"/>
</dbReference>
<dbReference type="PROSITE" id="PS01134">
    <property type="entry name" value="FTSZ_1"/>
    <property type="match status" value="1"/>
</dbReference>
<dbReference type="PROSITE" id="PS01135">
    <property type="entry name" value="FTSZ_2"/>
    <property type="match status" value="1"/>
</dbReference>
<keyword id="KW-0131">Cell cycle</keyword>
<keyword id="KW-0132">Cell division</keyword>
<keyword id="KW-0963">Cytoplasm</keyword>
<keyword id="KW-0342">GTP-binding</keyword>
<keyword id="KW-0547">Nucleotide-binding</keyword>
<keyword id="KW-1185">Reference proteome</keyword>
<keyword id="KW-0717">Septation</keyword>
<proteinExistence type="inferred from homology"/>
<comment type="function">
    <text evidence="1">Essential cell division protein that forms a contractile ring structure (Z ring) at the future cell division site. The regulation of the ring assembly controls the timing and the location of cell division. One of the functions of the FtsZ ring is to recruit other cell division proteins to the septum to produce a new cell wall between the dividing cells. Binds GTP and shows GTPase activity.</text>
</comment>
<comment type="subunit">
    <text evidence="1">Homodimer. Polymerizes to form a dynamic ring structure in a strictly GTP-dependent manner. Interacts directly with several other division proteins.</text>
</comment>
<comment type="subcellular location">
    <subcellularLocation>
        <location evidence="1">Cytoplasm</location>
    </subcellularLocation>
    <text evidence="1">Assembles at midcell at the inner surface of the cytoplasmic membrane.</text>
</comment>
<comment type="similarity">
    <text evidence="1">Belongs to the FtsZ family.</text>
</comment>
<evidence type="ECO:0000255" key="1">
    <source>
        <dbReference type="HAMAP-Rule" id="MF_00909"/>
    </source>
</evidence>
<evidence type="ECO:0000256" key="2">
    <source>
        <dbReference type="SAM" id="MobiDB-lite"/>
    </source>
</evidence>
<accession>Q8TZK3</accession>
<protein>
    <recommendedName>
        <fullName evidence="1">Cell division protein FtsZ 1</fullName>
    </recommendedName>
</protein>
<organism>
    <name type="scientific">Pyrococcus furiosus (strain ATCC 43587 / DSM 3638 / JCM 8422 / Vc1)</name>
    <dbReference type="NCBI Taxonomy" id="186497"/>
    <lineage>
        <taxon>Archaea</taxon>
        <taxon>Methanobacteriati</taxon>
        <taxon>Methanobacteriota</taxon>
        <taxon>Thermococci</taxon>
        <taxon>Thermococcales</taxon>
        <taxon>Thermococcaceae</taxon>
        <taxon>Pyrococcus</taxon>
    </lineage>
</organism>
<feature type="chain" id="PRO_0000114405" description="Cell division protein FtsZ 1">
    <location>
        <begin position="1"/>
        <end position="372"/>
    </location>
</feature>
<feature type="region of interest" description="Disordered" evidence="2">
    <location>
        <begin position="350"/>
        <end position="372"/>
    </location>
</feature>
<feature type="compositionally biased region" description="Acidic residues" evidence="2">
    <location>
        <begin position="350"/>
        <end position="360"/>
    </location>
</feature>
<feature type="compositionally biased region" description="Low complexity" evidence="2">
    <location>
        <begin position="361"/>
        <end position="372"/>
    </location>
</feature>
<feature type="binding site" evidence="1">
    <location>
        <begin position="51"/>
        <end position="55"/>
    </location>
    <ligand>
        <name>GTP</name>
        <dbReference type="ChEBI" id="CHEBI:37565"/>
    </ligand>
</feature>
<feature type="binding site" evidence="1">
    <location>
        <begin position="138"/>
        <end position="140"/>
    </location>
    <ligand>
        <name>GTP</name>
        <dbReference type="ChEBI" id="CHEBI:37565"/>
    </ligand>
</feature>
<feature type="binding site" evidence="1">
    <location>
        <position position="169"/>
    </location>
    <ligand>
        <name>GTP</name>
        <dbReference type="ChEBI" id="CHEBI:37565"/>
    </ligand>
</feature>
<feature type="binding site" evidence="1">
    <location>
        <position position="173"/>
    </location>
    <ligand>
        <name>GTP</name>
        <dbReference type="ChEBI" id="CHEBI:37565"/>
    </ligand>
</feature>
<feature type="binding site" evidence="1">
    <location>
        <position position="216"/>
    </location>
    <ligand>
        <name>GTP</name>
        <dbReference type="ChEBI" id="CHEBI:37565"/>
    </ligand>
</feature>